<name>BR1A_LITPI</name>
<organism>
    <name type="scientific">Lithobates pipiens</name>
    <name type="common">Northern leopard frog</name>
    <name type="synonym">Rana pipiens</name>
    <dbReference type="NCBI Taxonomy" id="8404"/>
    <lineage>
        <taxon>Eukaryota</taxon>
        <taxon>Metazoa</taxon>
        <taxon>Chordata</taxon>
        <taxon>Craniata</taxon>
        <taxon>Vertebrata</taxon>
        <taxon>Euteleostomi</taxon>
        <taxon>Amphibia</taxon>
        <taxon>Batrachia</taxon>
        <taxon>Anura</taxon>
        <taxon>Neobatrachia</taxon>
        <taxon>Ranoidea</taxon>
        <taxon>Ranidae</taxon>
        <taxon>Lithobates</taxon>
    </lineage>
</organism>
<accession>P82841</accession>
<keyword id="KW-0878">Amphibian defense peptide</keyword>
<keyword id="KW-0044">Antibiotic</keyword>
<keyword id="KW-0929">Antimicrobial</keyword>
<keyword id="KW-0903">Direct protein sequencing</keyword>
<keyword id="KW-1015">Disulfide bond</keyword>
<keyword id="KW-0295">Fungicide</keyword>
<keyword id="KW-0964">Secreted</keyword>
<reference key="1">
    <citation type="journal article" date="2000" name="Eur. J. Biochem.">
        <title>Peptides with antimicrobial activity from four different families isolated from the skins of the North American frogs Rana luteiventris, Rana berlandieri and Rana pipiens.</title>
        <authorList>
            <person name="Goraya J."/>
            <person name="Wang Y."/>
            <person name="Li Z."/>
            <person name="O'Flaherty M."/>
            <person name="Knoop F.C."/>
            <person name="Platz J.E."/>
            <person name="Conlon J.M."/>
        </authorList>
    </citation>
    <scope>PROTEIN SEQUENCE</scope>
    <scope>FUNCTION</scope>
    <scope>MASS SPECTROMETRY</scope>
    <source>
        <tissue>Skin secretion</tissue>
    </source>
</reference>
<evidence type="ECO:0000250" key="1"/>
<evidence type="ECO:0000269" key="2">
    <source>
    </source>
</evidence>
<evidence type="ECO:0000305" key="3"/>
<sequence length="24" mass="2565">FLPIIAGVAAKVFPKIFCAISKKC</sequence>
<dbReference type="GO" id="GO:0005576">
    <property type="term" value="C:extracellular region"/>
    <property type="evidence" value="ECO:0000314"/>
    <property type="project" value="UniProtKB"/>
</dbReference>
<dbReference type="GO" id="GO:0050832">
    <property type="term" value="P:defense response to fungus"/>
    <property type="evidence" value="ECO:0000314"/>
    <property type="project" value="UniProtKB"/>
</dbReference>
<dbReference type="GO" id="GO:0050829">
    <property type="term" value="P:defense response to Gram-negative bacterium"/>
    <property type="evidence" value="ECO:0000314"/>
    <property type="project" value="UniProtKB"/>
</dbReference>
<dbReference type="GO" id="GO:0050830">
    <property type="term" value="P:defense response to Gram-positive bacterium"/>
    <property type="evidence" value="ECO:0000314"/>
    <property type="project" value="UniProtKB"/>
</dbReference>
<dbReference type="GO" id="GO:0031640">
    <property type="term" value="P:killing of cells of another organism"/>
    <property type="evidence" value="ECO:0007669"/>
    <property type="project" value="UniProtKB-KW"/>
</dbReference>
<dbReference type="GO" id="GO:0032024">
    <property type="term" value="P:positive regulation of insulin secretion"/>
    <property type="evidence" value="ECO:0000314"/>
    <property type="project" value="UniProtKB"/>
</dbReference>
<dbReference type="GO" id="GO:0043306">
    <property type="term" value="P:positive regulation of mast cell degranulation"/>
    <property type="evidence" value="ECO:0000314"/>
    <property type="project" value="UniProtKB"/>
</dbReference>
<dbReference type="InterPro" id="IPR012520">
    <property type="entry name" value="Antimicrobial_frog_1"/>
</dbReference>
<dbReference type="Pfam" id="PF08018">
    <property type="entry name" value="Antimicrobial_1"/>
    <property type="match status" value="1"/>
</dbReference>
<proteinExistence type="evidence at protein level"/>
<protein>
    <recommendedName>
        <fullName>Brevinin-1Pa</fullName>
    </recommendedName>
</protein>
<comment type="function">
    <text evidence="2">Antibacterial activity against Gram-positive bacterium S.aureus and Gram-negative bacterium E.coli. Has activity against C.albicans.</text>
</comment>
<comment type="subcellular location">
    <subcellularLocation>
        <location>Secreted</location>
    </subcellularLocation>
</comment>
<comment type="tissue specificity">
    <text>Expressed by the skin glands.</text>
</comment>
<comment type="mass spectrometry" mass="2563.0" method="Electrospray" evidence="2"/>
<comment type="similarity">
    <text evidence="3">Belongs to the frog skin active peptide (FSAP) family. Brevinin subfamily.</text>
</comment>
<feature type="peptide" id="PRO_0000043542" description="Brevinin-1Pa">
    <location>
        <begin position="1"/>
        <end position="24"/>
    </location>
</feature>
<feature type="disulfide bond" evidence="1">
    <location>
        <begin position="18"/>
        <end position="24"/>
    </location>
</feature>